<protein>
    <recommendedName>
        <fullName evidence="1">Lipoyl synthase</fullName>
        <ecNumber evidence="1">2.8.1.8</ecNumber>
    </recommendedName>
    <alternativeName>
        <fullName evidence="1">Lip-syn</fullName>
        <shortName evidence="1">LS</shortName>
    </alternativeName>
    <alternativeName>
        <fullName evidence="1">Lipoate synthase</fullName>
    </alternativeName>
    <alternativeName>
        <fullName evidence="1">Lipoic acid synthase</fullName>
    </alternativeName>
    <alternativeName>
        <fullName evidence="1">Sulfur insertion protein LipA</fullName>
    </alternativeName>
</protein>
<reference key="1">
    <citation type="submission" date="2006-12" db="EMBL/GenBank/DDBJ databases">
        <title>Complete sequence of Shewanella amazonensis SB2B.</title>
        <authorList>
            <consortium name="US DOE Joint Genome Institute"/>
            <person name="Copeland A."/>
            <person name="Lucas S."/>
            <person name="Lapidus A."/>
            <person name="Barry K."/>
            <person name="Detter J.C."/>
            <person name="Glavina del Rio T."/>
            <person name="Hammon N."/>
            <person name="Israni S."/>
            <person name="Dalin E."/>
            <person name="Tice H."/>
            <person name="Pitluck S."/>
            <person name="Munk A.C."/>
            <person name="Brettin T."/>
            <person name="Bruce D."/>
            <person name="Han C."/>
            <person name="Tapia R."/>
            <person name="Gilna P."/>
            <person name="Schmutz J."/>
            <person name="Larimer F."/>
            <person name="Land M."/>
            <person name="Hauser L."/>
            <person name="Kyrpides N."/>
            <person name="Mikhailova N."/>
            <person name="Fredrickson J."/>
            <person name="Richardson P."/>
        </authorList>
    </citation>
    <scope>NUCLEOTIDE SEQUENCE [LARGE SCALE GENOMIC DNA]</scope>
    <source>
        <strain>ATCC BAA-1098 / SB2B</strain>
    </source>
</reference>
<keyword id="KW-0004">4Fe-4S</keyword>
<keyword id="KW-0963">Cytoplasm</keyword>
<keyword id="KW-0408">Iron</keyword>
<keyword id="KW-0411">Iron-sulfur</keyword>
<keyword id="KW-0479">Metal-binding</keyword>
<keyword id="KW-1185">Reference proteome</keyword>
<keyword id="KW-0949">S-adenosyl-L-methionine</keyword>
<keyword id="KW-0808">Transferase</keyword>
<comment type="function">
    <text evidence="1">Catalyzes the radical-mediated insertion of two sulfur atoms into the C-6 and C-8 positions of the octanoyl moiety bound to the lipoyl domains of lipoate-dependent enzymes, thereby converting the octanoylated domains into lipoylated derivatives.</text>
</comment>
<comment type="catalytic activity">
    <reaction evidence="1">
        <text>[[Fe-S] cluster scaffold protein carrying a second [4Fe-4S](2+) cluster] + N(6)-octanoyl-L-lysyl-[protein] + 2 oxidized [2Fe-2S]-[ferredoxin] + 2 S-adenosyl-L-methionine + 4 H(+) = [[Fe-S] cluster scaffold protein] + N(6)-[(R)-dihydrolipoyl]-L-lysyl-[protein] + 4 Fe(3+) + 2 hydrogen sulfide + 2 5'-deoxyadenosine + 2 L-methionine + 2 reduced [2Fe-2S]-[ferredoxin]</text>
        <dbReference type="Rhea" id="RHEA:16585"/>
        <dbReference type="Rhea" id="RHEA-COMP:9928"/>
        <dbReference type="Rhea" id="RHEA-COMP:10000"/>
        <dbReference type="Rhea" id="RHEA-COMP:10001"/>
        <dbReference type="Rhea" id="RHEA-COMP:10475"/>
        <dbReference type="Rhea" id="RHEA-COMP:14568"/>
        <dbReference type="Rhea" id="RHEA-COMP:14569"/>
        <dbReference type="ChEBI" id="CHEBI:15378"/>
        <dbReference type="ChEBI" id="CHEBI:17319"/>
        <dbReference type="ChEBI" id="CHEBI:29034"/>
        <dbReference type="ChEBI" id="CHEBI:29919"/>
        <dbReference type="ChEBI" id="CHEBI:33722"/>
        <dbReference type="ChEBI" id="CHEBI:33737"/>
        <dbReference type="ChEBI" id="CHEBI:33738"/>
        <dbReference type="ChEBI" id="CHEBI:57844"/>
        <dbReference type="ChEBI" id="CHEBI:59789"/>
        <dbReference type="ChEBI" id="CHEBI:78809"/>
        <dbReference type="ChEBI" id="CHEBI:83100"/>
        <dbReference type="EC" id="2.8.1.8"/>
    </reaction>
</comment>
<comment type="cofactor">
    <cofactor evidence="1">
        <name>[4Fe-4S] cluster</name>
        <dbReference type="ChEBI" id="CHEBI:49883"/>
    </cofactor>
    <text evidence="1">Binds 2 [4Fe-4S] clusters per subunit. One cluster is coordinated with 3 cysteines and an exchangeable S-adenosyl-L-methionine.</text>
</comment>
<comment type="pathway">
    <text evidence="1">Protein modification; protein lipoylation via endogenous pathway; protein N(6)-(lipoyl)lysine from octanoyl-[acyl-carrier-protein]: step 2/2.</text>
</comment>
<comment type="subcellular location">
    <subcellularLocation>
        <location evidence="1">Cytoplasm</location>
    </subcellularLocation>
</comment>
<comment type="similarity">
    <text evidence="1">Belongs to the radical SAM superfamily. Lipoyl synthase family.</text>
</comment>
<accession>A1S8U1</accession>
<evidence type="ECO:0000255" key="1">
    <source>
        <dbReference type="HAMAP-Rule" id="MF_00206"/>
    </source>
</evidence>
<evidence type="ECO:0000255" key="2">
    <source>
        <dbReference type="PROSITE-ProRule" id="PRU01266"/>
    </source>
</evidence>
<proteinExistence type="inferred from homology"/>
<name>LIPA_SHEAM</name>
<gene>
    <name evidence="1" type="primary">lipA</name>
    <name type="ordered locus">Sama_2595</name>
</gene>
<organism>
    <name type="scientific">Shewanella amazonensis (strain ATCC BAA-1098 / SB2B)</name>
    <dbReference type="NCBI Taxonomy" id="326297"/>
    <lineage>
        <taxon>Bacteria</taxon>
        <taxon>Pseudomonadati</taxon>
        <taxon>Pseudomonadota</taxon>
        <taxon>Gammaproteobacteria</taxon>
        <taxon>Alteromonadales</taxon>
        <taxon>Shewanellaceae</taxon>
        <taxon>Shewanella</taxon>
    </lineage>
</organism>
<feature type="chain" id="PRO_1000012271" description="Lipoyl synthase">
    <location>
        <begin position="1"/>
        <end position="321"/>
    </location>
</feature>
<feature type="domain" description="Radical SAM core" evidence="2">
    <location>
        <begin position="80"/>
        <end position="297"/>
    </location>
</feature>
<feature type="binding site" evidence="1">
    <location>
        <position position="68"/>
    </location>
    <ligand>
        <name>[4Fe-4S] cluster</name>
        <dbReference type="ChEBI" id="CHEBI:49883"/>
        <label>1</label>
    </ligand>
</feature>
<feature type="binding site" evidence="1">
    <location>
        <position position="73"/>
    </location>
    <ligand>
        <name>[4Fe-4S] cluster</name>
        <dbReference type="ChEBI" id="CHEBI:49883"/>
        <label>1</label>
    </ligand>
</feature>
<feature type="binding site" evidence="1">
    <location>
        <position position="79"/>
    </location>
    <ligand>
        <name>[4Fe-4S] cluster</name>
        <dbReference type="ChEBI" id="CHEBI:49883"/>
        <label>1</label>
    </ligand>
</feature>
<feature type="binding site" evidence="1">
    <location>
        <position position="94"/>
    </location>
    <ligand>
        <name>[4Fe-4S] cluster</name>
        <dbReference type="ChEBI" id="CHEBI:49883"/>
        <label>2</label>
        <note>4Fe-4S-S-AdoMet</note>
    </ligand>
</feature>
<feature type="binding site" evidence="1">
    <location>
        <position position="98"/>
    </location>
    <ligand>
        <name>[4Fe-4S] cluster</name>
        <dbReference type="ChEBI" id="CHEBI:49883"/>
        <label>2</label>
        <note>4Fe-4S-S-AdoMet</note>
    </ligand>
</feature>
<feature type="binding site" evidence="1">
    <location>
        <position position="101"/>
    </location>
    <ligand>
        <name>[4Fe-4S] cluster</name>
        <dbReference type="ChEBI" id="CHEBI:49883"/>
        <label>2</label>
        <note>4Fe-4S-S-AdoMet</note>
    </ligand>
</feature>
<feature type="binding site" evidence="1">
    <location>
        <position position="308"/>
    </location>
    <ligand>
        <name>[4Fe-4S] cluster</name>
        <dbReference type="ChEBI" id="CHEBI:49883"/>
        <label>1</label>
    </ligand>
</feature>
<sequence>MNRPERLQPGVKLRDADKVARIPVKIMPSERETMLRKPDWLRVKLPASNQRITEIKQALRSNGLHSVCEEASCPNLAECFNHGTATFMILGAICTRRCPFCDVAHGRPLKPDADEPVKLAKTIRDMKLKYVVITSVDRDDLRDGGAQHFADCIREIRALNPHIQIETLVPDFRGRIDVALDILSTNPPDVFNHNLETAPAHYRKARPGANYQWSLDLLKRFKERHPNIPTKSGLMMGLGETNEEIIQVLKDLRAHDVNMLTLGQYLQPSKFHLPVERYVSPQEFDELKVIAEDLGFSHAACGPLVRSSYHADLQAQGKEVK</sequence>
<dbReference type="EC" id="2.8.1.8" evidence="1"/>
<dbReference type="EMBL" id="CP000507">
    <property type="protein sequence ID" value="ABM00798.1"/>
    <property type="molecule type" value="Genomic_DNA"/>
</dbReference>
<dbReference type="RefSeq" id="WP_011760704.1">
    <property type="nucleotide sequence ID" value="NC_008700.1"/>
</dbReference>
<dbReference type="SMR" id="A1S8U1"/>
<dbReference type="STRING" id="326297.Sama_2595"/>
<dbReference type="KEGG" id="saz:Sama_2595"/>
<dbReference type="eggNOG" id="COG0320">
    <property type="taxonomic scope" value="Bacteria"/>
</dbReference>
<dbReference type="HOGENOM" id="CLU_033144_2_1_6"/>
<dbReference type="OrthoDB" id="9787898at2"/>
<dbReference type="UniPathway" id="UPA00538">
    <property type="reaction ID" value="UER00593"/>
</dbReference>
<dbReference type="Proteomes" id="UP000009175">
    <property type="component" value="Chromosome"/>
</dbReference>
<dbReference type="GO" id="GO:0005737">
    <property type="term" value="C:cytoplasm"/>
    <property type="evidence" value="ECO:0007669"/>
    <property type="project" value="UniProtKB-SubCell"/>
</dbReference>
<dbReference type="GO" id="GO:0051539">
    <property type="term" value="F:4 iron, 4 sulfur cluster binding"/>
    <property type="evidence" value="ECO:0007669"/>
    <property type="project" value="UniProtKB-UniRule"/>
</dbReference>
<dbReference type="GO" id="GO:0016992">
    <property type="term" value="F:lipoate synthase activity"/>
    <property type="evidence" value="ECO:0007669"/>
    <property type="project" value="UniProtKB-UniRule"/>
</dbReference>
<dbReference type="GO" id="GO:0046872">
    <property type="term" value="F:metal ion binding"/>
    <property type="evidence" value="ECO:0007669"/>
    <property type="project" value="UniProtKB-KW"/>
</dbReference>
<dbReference type="CDD" id="cd01335">
    <property type="entry name" value="Radical_SAM"/>
    <property type="match status" value="1"/>
</dbReference>
<dbReference type="FunFam" id="3.20.20.70:FF:000023">
    <property type="entry name" value="Lipoyl synthase"/>
    <property type="match status" value="1"/>
</dbReference>
<dbReference type="Gene3D" id="3.20.20.70">
    <property type="entry name" value="Aldolase class I"/>
    <property type="match status" value="1"/>
</dbReference>
<dbReference type="HAMAP" id="MF_00206">
    <property type="entry name" value="Lipoyl_synth"/>
    <property type="match status" value="1"/>
</dbReference>
<dbReference type="InterPro" id="IPR013785">
    <property type="entry name" value="Aldolase_TIM"/>
</dbReference>
<dbReference type="InterPro" id="IPR006638">
    <property type="entry name" value="Elp3/MiaA/NifB-like_rSAM"/>
</dbReference>
<dbReference type="InterPro" id="IPR031691">
    <property type="entry name" value="LIAS_N"/>
</dbReference>
<dbReference type="InterPro" id="IPR003698">
    <property type="entry name" value="Lipoyl_synth"/>
</dbReference>
<dbReference type="InterPro" id="IPR007197">
    <property type="entry name" value="rSAM"/>
</dbReference>
<dbReference type="NCBIfam" id="TIGR00510">
    <property type="entry name" value="lipA"/>
    <property type="match status" value="1"/>
</dbReference>
<dbReference type="NCBIfam" id="NF004019">
    <property type="entry name" value="PRK05481.1"/>
    <property type="match status" value="1"/>
</dbReference>
<dbReference type="NCBIfam" id="NF009544">
    <property type="entry name" value="PRK12928.1"/>
    <property type="match status" value="1"/>
</dbReference>
<dbReference type="PANTHER" id="PTHR10949">
    <property type="entry name" value="LIPOYL SYNTHASE"/>
    <property type="match status" value="1"/>
</dbReference>
<dbReference type="PANTHER" id="PTHR10949:SF0">
    <property type="entry name" value="LIPOYL SYNTHASE, MITOCHONDRIAL"/>
    <property type="match status" value="1"/>
</dbReference>
<dbReference type="Pfam" id="PF16881">
    <property type="entry name" value="LIAS_N"/>
    <property type="match status" value="1"/>
</dbReference>
<dbReference type="Pfam" id="PF04055">
    <property type="entry name" value="Radical_SAM"/>
    <property type="match status" value="1"/>
</dbReference>
<dbReference type="PIRSF" id="PIRSF005963">
    <property type="entry name" value="Lipoyl_synth"/>
    <property type="match status" value="1"/>
</dbReference>
<dbReference type="SFLD" id="SFLDF00271">
    <property type="entry name" value="lipoyl_synthase"/>
    <property type="match status" value="1"/>
</dbReference>
<dbReference type="SFLD" id="SFLDG01058">
    <property type="entry name" value="lipoyl_synthase_like"/>
    <property type="match status" value="1"/>
</dbReference>
<dbReference type="SMART" id="SM00729">
    <property type="entry name" value="Elp3"/>
    <property type="match status" value="1"/>
</dbReference>
<dbReference type="SUPFAM" id="SSF102114">
    <property type="entry name" value="Radical SAM enzymes"/>
    <property type="match status" value="1"/>
</dbReference>
<dbReference type="PROSITE" id="PS51918">
    <property type="entry name" value="RADICAL_SAM"/>
    <property type="match status" value="1"/>
</dbReference>